<sequence>MKKIAVLTSGGDSPGMNAAVRAVVRTAIYNEIEVYGVYHGYQGLLNDDIHKLELGSVGDTIQRGGTFLYSARCPEFKEQEVRKVAIENLRKRGIEGLVVIGGDGSYRGAQRISEECKEIQTIGIPGTIDNDINGTDFTIGFDTALNTIIGLVDKIRDTASSHARTFIIEAMGRDCGDLALWAGLSVGAETIVVPEVKTDIKEIADKIEQGIKRGKKHSIVLVAEGCMTAQDCQKELSQYINVDNRVSVLGHVQRGGSPTGADRVLASRLGGYAVDLLMQGETAKGVGIKNNKIVATSFDEIFDGKDHKFDYSLYELANKLSI</sequence>
<dbReference type="EC" id="2.7.1.11" evidence="1"/>
<dbReference type="EMBL" id="AJ938182">
    <property type="protein sequence ID" value="CAI81246.1"/>
    <property type="molecule type" value="Genomic_DNA"/>
</dbReference>
<dbReference type="RefSeq" id="WP_000717561.1">
    <property type="nucleotide sequence ID" value="NC_007622.1"/>
</dbReference>
<dbReference type="SMR" id="Q2YTE2"/>
<dbReference type="KEGG" id="sab:SAB1557c"/>
<dbReference type="HOGENOM" id="CLU_020655_0_1_9"/>
<dbReference type="UniPathway" id="UPA00109">
    <property type="reaction ID" value="UER00182"/>
</dbReference>
<dbReference type="GO" id="GO:0005945">
    <property type="term" value="C:6-phosphofructokinase complex"/>
    <property type="evidence" value="ECO:0007669"/>
    <property type="project" value="TreeGrafter"/>
</dbReference>
<dbReference type="GO" id="GO:0003872">
    <property type="term" value="F:6-phosphofructokinase activity"/>
    <property type="evidence" value="ECO:0007669"/>
    <property type="project" value="UniProtKB-UniRule"/>
</dbReference>
<dbReference type="GO" id="GO:0016208">
    <property type="term" value="F:AMP binding"/>
    <property type="evidence" value="ECO:0007669"/>
    <property type="project" value="TreeGrafter"/>
</dbReference>
<dbReference type="GO" id="GO:0005524">
    <property type="term" value="F:ATP binding"/>
    <property type="evidence" value="ECO:0007669"/>
    <property type="project" value="UniProtKB-KW"/>
</dbReference>
<dbReference type="GO" id="GO:0070095">
    <property type="term" value="F:fructose-6-phosphate binding"/>
    <property type="evidence" value="ECO:0007669"/>
    <property type="project" value="TreeGrafter"/>
</dbReference>
<dbReference type="GO" id="GO:0042802">
    <property type="term" value="F:identical protein binding"/>
    <property type="evidence" value="ECO:0007669"/>
    <property type="project" value="TreeGrafter"/>
</dbReference>
<dbReference type="GO" id="GO:0046872">
    <property type="term" value="F:metal ion binding"/>
    <property type="evidence" value="ECO:0007669"/>
    <property type="project" value="UniProtKB-KW"/>
</dbReference>
<dbReference type="GO" id="GO:0048029">
    <property type="term" value="F:monosaccharide binding"/>
    <property type="evidence" value="ECO:0007669"/>
    <property type="project" value="TreeGrafter"/>
</dbReference>
<dbReference type="GO" id="GO:0061621">
    <property type="term" value="P:canonical glycolysis"/>
    <property type="evidence" value="ECO:0007669"/>
    <property type="project" value="TreeGrafter"/>
</dbReference>
<dbReference type="GO" id="GO:0030388">
    <property type="term" value="P:fructose 1,6-bisphosphate metabolic process"/>
    <property type="evidence" value="ECO:0007669"/>
    <property type="project" value="TreeGrafter"/>
</dbReference>
<dbReference type="GO" id="GO:0006002">
    <property type="term" value="P:fructose 6-phosphate metabolic process"/>
    <property type="evidence" value="ECO:0007669"/>
    <property type="project" value="InterPro"/>
</dbReference>
<dbReference type="FunFam" id="3.40.50.450:FF:000001">
    <property type="entry name" value="ATP-dependent 6-phosphofructokinase"/>
    <property type="match status" value="1"/>
</dbReference>
<dbReference type="FunFam" id="3.40.50.460:FF:000002">
    <property type="entry name" value="ATP-dependent 6-phosphofructokinase"/>
    <property type="match status" value="1"/>
</dbReference>
<dbReference type="Gene3D" id="3.40.50.450">
    <property type="match status" value="1"/>
</dbReference>
<dbReference type="Gene3D" id="3.40.50.460">
    <property type="entry name" value="Phosphofructokinase domain"/>
    <property type="match status" value="1"/>
</dbReference>
<dbReference type="HAMAP" id="MF_00339">
    <property type="entry name" value="Phosphofructokinase_I_B1"/>
    <property type="match status" value="1"/>
</dbReference>
<dbReference type="InterPro" id="IPR022953">
    <property type="entry name" value="ATP_PFK"/>
</dbReference>
<dbReference type="InterPro" id="IPR012003">
    <property type="entry name" value="ATP_PFK_prok-type"/>
</dbReference>
<dbReference type="InterPro" id="IPR012828">
    <property type="entry name" value="PFKA_ATP_prok"/>
</dbReference>
<dbReference type="InterPro" id="IPR015912">
    <property type="entry name" value="Phosphofructokinase_CS"/>
</dbReference>
<dbReference type="InterPro" id="IPR000023">
    <property type="entry name" value="Phosphofructokinase_dom"/>
</dbReference>
<dbReference type="InterPro" id="IPR035966">
    <property type="entry name" value="PKF_sf"/>
</dbReference>
<dbReference type="NCBIfam" id="TIGR02482">
    <property type="entry name" value="PFKA_ATP"/>
    <property type="match status" value="1"/>
</dbReference>
<dbReference type="NCBIfam" id="NF002872">
    <property type="entry name" value="PRK03202.1"/>
    <property type="match status" value="1"/>
</dbReference>
<dbReference type="PANTHER" id="PTHR13697:SF4">
    <property type="entry name" value="ATP-DEPENDENT 6-PHOSPHOFRUCTOKINASE"/>
    <property type="match status" value="1"/>
</dbReference>
<dbReference type="PANTHER" id="PTHR13697">
    <property type="entry name" value="PHOSPHOFRUCTOKINASE"/>
    <property type="match status" value="1"/>
</dbReference>
<dbReference type="Pfam" id="PF00365">
    <property type="entry name" value="PFK"/>
    <property type="match status" value="1"/>
</dbReference>
<dbReference type="PIRSF" id="PIRSF000532">
    <property type="entry name" value="ATP_PFK_prok"/>
    <property type="match status" value="1"/>
</dbReference>
<dbReference type="PRINTS" id="PR00476">
    <property type="entry name" value="PHFRCTKINASE"/>
</dbReference>
<dbReference type="SUPFAM" id="SSF53784">
    <property type="entry name" value="Phosphofructokinase"/>
    <property type="match status" value="1"/>
</dbReference>
<dbReference type="PROSITE" id="PS00433">
    <property type="entry name" value="PHOSPHOFRUCTOKINASE"/>
    <property type="match status" value="1"/>
</dbReference>
<accession>Q2YTE2</accession>
<comment type="function">
    <text evidence="1">Catalyzes the phosphorylation of D-fructose 6-phosphate to fructose 1,6-bisphosphate by ATP, the first committing step of glycolysis.</text>
</comment>
<comment type="catalytic activity">
    <reaction evidence="1">
        <text>beta-D-fructose 6-phosphate + ATP = beta-D-fructose 1,6-bisphosphate + ADP + H(+)</text>
        <dbReference type="Rhea" id="RHEA:16109"/>
        <dbReference type="ChEBI" id="CHEBI:15378"/>
        <dbReference type="ChEBI" id="CHEBI:30616"/>
        <dbReference type="ChEBI" id="CHEBI:32966"/>
        <dbReference type="ChEBI" id="CHEBI:57634"/>
        <dbReference type="ChEBI" id="CHEBI:456216"/>
        <dbReference type="EC" id="2.7.1.11"/>
    </reaction>
</comment>
<comment type="cofactor">
    <cofactor evidence="1">
        <name>Mg(2+)</name>
        <dbReference type="ChEBI" id="CHEBI:18420"/>
    </cofactor>
</comment>
<comment type="activity regulation">
    <text evidence="1">Allosterically activated by ADP and other diphosphonucleosides, and allosterically inhibited by phosphoenolpyruvate.</text>
</comment>
<comment type="pathway">
    <text evidence="1">Carbohydrate degradation; glycolysis; D-glyceraldehyde 3-phosphate and glycerone phosphate from D-glucose: step 3/4.</text>
</comment>
<comment type="subunit">
    <text evidence="1">Homotetramer.</text>
</comment>
<comment type="subcellular location">
    <subcellularLocation>
        <location evidence="1">Cytoplasm</location>
    </subcellularLocation>
</comment>
<comment type="similarity">
    <text evidence="1">Belongs to the phosphofructokinase type A (PFKA) family. ATP-dependent PFK group I subfamily. Prokaryotic clade 'B1' sub-subfamily.</text>
</comment>
<keyword id="KW-0021">Allosteric enzyme</keyword>
<keyword id="KW-0067">ATP-binding</keyword>
<keyword id="KW-0963">Cytoplasm</keyword>
<keyword id="KW-0324">Glycolysis</keyword>
<keyword id="KW-0418">Kinase</keyword>
<keyword id="KW-0460">Magnesium</keyword>
<keyword id="KW-0479">Metal-binding</keyword>
<keyword id="KW-0547">Nucleotide-binding</keyword>
<keyword id="KW-0808">Transferase</keyword>
<reference key="1">
    <citation type="journal article" date="2007" name="PLoS ONE">
        <title>Molecular correlates of host specialization in Staphylococcus aureus.</title>
        <authorList>
            <person name="Herron-Olson L."/>
            <person name="Fitzgerald J.R."/>
            <person name="Musser J.M."/>
            <person name="Kapur V."/>
        </authorList>
    </citation>
    <scope>NUCLEOTIDE SEQUENCE [LARGE SCALE GENOMIC DNA]</scope>
    <source>
        <strain>bovine RF122 / ET3-1</strain>
    </source>
</reference>
<organism>
    <name type="scientific">Staphylococcus aureus (strain bovine RF122 / ET3-1)</name>
    <dbReference type="NCBI Taxonomy" id="273036"/>
    <lineage>
        <taxon>Bacteria</taxon>
        <taxon>Bacillati</taxon>
        <taxon>Bacillota</taxon>
        <taxon>Bacilli</taxon>
        <taxon>Bacillales</taxon>
        <taxon>Staphylococcaceae</taxon>
        <taxon>Staphylococcus</taxon>
    </lineage>
</organism>
<protein>
    <recommendedName>
        <fullName evidence="1">ATP-dependent 6-phosphofructokinase</fullName>
        <shortName evidence="1">ATP-PFK</shortName>
        <shortName evidence="1">Phosphofructokinase</shortName>
        <ecNumber evidence="1">2.7.1.11</ecNumber>
    </recommendedName>
    <alternativeName>
        <fullName evidence="1">Phosphohexokinase</fullName>
    </alternativeName>
</protein>
<proteinExistence type="inferred from homology"/>
<gene>
    <name evidence="1" type="primary">pfkA</name>
    <name type="ordered locus">SAB1557c</name>
</gene>
<evidence type="ECO:0000255" key="1">
    <source>
        <dbReference type="HAMAP-Rule" id="MF_00339"/>
    </source>
</evidence>
<feature type="chain" id="PRO_1000059792" description="ATP-dependent 6-phosphofructokinase">
    <location>
        <begin position="1"/>
        <end position="322"/>
    </location>
</feature>
<feature type="active site" description="Proton acceptor" evidence="1">
    <location>
        <position position="129"/>
    </location>
</feature>
<feature type="binding site" evidence="1">
    <location>
        <position position="11"/>
    </location>
    <ligand>
        <name>ATP</name>
        <dbReference type="ChEBI" id="CHEBI:30616"/>
    </ligand>
</feature>
<feature type="binding site" evidence="1">
    <location>
        <begin position="21"/>
        <end position="25"/>
    </location>
    <ligand>
        <name>ADP</name>
        <dbReference type="ChEBI" id="CHEBI:456216"/>
        <note>allosteric activator; ligand shared between dimeric partners</note>
    </ligand>
</feature>
<feature type="binding site" evidence="1">
    <location>
        <begin position="72"/>
        <end position="73"/>
    </location>
    <ligand>
        <name>ATP</name>
        <dbReference type="ChEBI" id="CHEBI:30616"/>
    </ligand>
</feature>
<feature type="binding site" evidence="1">
    <location>
        <begin position="102"/>
        <end position="105"/>
    </location>
    <ligand>
        <name>ATP</name>
        <dbReference type="ChEBI" id="CHEBI:30616"/>
    </ligand>
</feature>
<feature type="binding site" evidence="1">
    <location>
        <position position="103"/>
    </location>
    <ligand>
        <name>Mg(2+)</name>
        <dbReference type="ChEBI" id="CHEBI:18420"/>
        <note>catalytic</note>
    </ligand>
</feature>
<feature type="binding site" description="in other chain" evidence="1">
    <location>
        <begin position="127"/>
        <end position="129"/>
    </location>
    <ligand>
        <name>substrate</name>
        <note>ligand shared between dimeric partners</note>
    </ligand>
</feature>
<feature type="binding site" description="in other chain" evidence="1">
    <location>
        <position position="156"/>
    </location>
    <ligand>
        <name>ADP</name>
        <dbReference type="ChEBI" id="CHEBI:456216"/>
        <note>allosteric activator; ligand shared between dimeric partners</note>
    </ligand>
</feature>
<feature type="binding site" evidence="1">
    <location>
        <position position="164"/>
    </location>
    <ligand>
        <name>substrate</name>
        <note>ligand shared between dimeric partners</note>
    </ligand>
</feature>
<feature type="binding site" description="in other chain" evidence="1">
    <location>
        <begin position="171"/>
        <end position="173"/>
    </location>
    <ligand>
        <name>substrate</name>
        <note>ligand shared between dimeric partners</note>
    </ligand>
</feature>
<feature type="binding site" description="in other chain" evidence="1">
    <location>
        <begin position="187"/>
        <end position="189"/>
    </location>
    <ligand>
        <name>ADP</name>
        <dbReference type="ChEBI" id="CHEBI:456216"/>
        <note>allosteric activator; ligand shared between dimeric partners</note>
    </ligand>
</feature>
<feature type="binding site" description="in other chain" evidence="1">
    <location>
        <position position="213"/>
    </location>
    <ligand>
        <name>ADP</name>
        <dbReference type="ChEBI" id="CHEBI:456216"/>
        <note>allosteric activator; ligand shared between dimeric partners</note>
    </ligand>
</feature>
<feature type="binding site" description="in other chain" evidence="1">
    <location>
        <begin position="215"/>
        <end position="217"/>
    </location>
    <ligand>
        <name>ADP</name>
        <dbReference type="ChEBI" id="CHEBI:456216"/>
        <note>allosteric activator; ligand shared between dimeric partners</note>
    </ligand>
</feature>
<feature type="binding site" description="in other chain" evidence="1">
    <location>
        <position position="224"/>
    </location>
    <ligand>
        <name>substrate</name>
        <note>ligand shared between dimeric partners</note>
    </ligand>
</feature>
<feature type="binding site" evidence="1">
    <location>
        <position position="245"/>
    </location>
    <ligand>
        <name>substrate</name>
        <note>ligand shared between dimeric partners</note>
    </ligand>
</feature>
<feature type="binding site" description="in other chain" evidence="1">
    <location>
        <begin position="251"/>
        <end position="254"/>
    </location>
    <ligand>
        <name>substrate</name>
        <note>ligand shared between dimeric partners</note>
    </ligand>
</feature>
<name>PFKA_STAAB</name>